<keyword id="KW-0227">DNA damage</keyword>
<keyword id="KW-0234">DNA repair</keyword>
<keyword id="KW-0238">DNA-binding</keyword>
<keyword id="KW-0326">Glycosidase</keyword>
<keyword id="KW-0378">Hydrolase</keyword>
<keyword id="KW-0456">Lyase</keyword>
<keyword id="KW-0479">Metal-binding</keyword>
<keyword id="KW-0511">Multifunctional enzyme</keyword>
<keyword id="KW-1185">Reference proteome</keyword>
<keyword id="KW-0862">Zinc</keyword>
<keyword id="KW-0863">Zinc-finger</keyword>
<name>FPG_ACIET</name>
<gene>
    <name evidence="2" type="primary">mutM</name>
    <name evidence="2" type="synonym">fpg</name>
    <name type="ordered locus">Dtpsy_0828</name>
</gene>
<reference key="1">
    <citation type="submission" date="2009-01" db="EMBL/GenBank/DDBJ databases">
        <title>Complete sequence of Diaphorobacter sp. TPSY.</title>
        <authorList>
            <consortium name="US DOE Joint Genome Institute"/>
            <person name="Lucas S."/>
            <person name="Copeland A."/>
            <person name="Lapidus A."/>
            <person name="Glavina del Rio T."/>
            <person name="Tice H."/>
            <person name="Bruce D."/>
            <person name="Goodwin L."/>
            <person name="Pitluck S."/>
            <person name="Chertkov O."/>
            <person name="Brettin T."/>
            <person name="Detter J.C."/>
            <person name="Han C."/>
            <person name="Larimer F."/>
            <person name="Land M."/>
            <person name="Hauser L."/>
            <person name="Kyrpides N."/>
            <person name="Mikhailova N."/>
            <person name="Coates J.D."/>
        </authorList>
    </citation>
    <scope>NUCLEOTIDE SEQUENCE [LARGE SCALE GENOMIC DNA]</scope>
    <source>
        <strain>TPSY</strain>
    </source>
</reference>
<protein>
    <recommendedName>
        <fullName evidence="2">Formamidopyrimidine-DNA glycosylase</fullName>
        <shortName evidence="2">Fapy-DNA glycosylase</shortName>
        <ecNumber evidence="2">3.2.2.23</ecNumber>
    </recommendedName>
    <alternativeName>
        <fullName evidence="2">DNA-(apurinic or apyrimidinic site) lyase MutM</fullName>
        <shortName evidence="2">AP lyase MutM</shortName>
        <ecNumber evidence="2">4.2.99.18</ecNumber>
    </alternativeName>
</protein>
<comment type="function">
    <text evidence="2">Involved in base excision repair of DNA damaged by oxidation or by mutagenic agents. Acts as a DNA glycosylase that recognizes and removes damaged bases. Has a preference for oxidized purines, such as 7,8-dihydro-8-oxoguanine (8-oxoG). Has AP (apurinic/apyrimidinic) lyase activity and introduces nicks in the DNA strand. Cleaves the DNA backbone by beta-delta elimination to generate a single-strand break at the site of the removed base with both 3'- and 5'-phosphates.</text>
</comment>
<comment type="catalytic activity">
    <reaction evidence="2">
        <text>Hydrolysis of DNA containing ring-opened 7-methylguanine residues, releasing 2,6-diamino-4-hydroxy-5-(N-methyl)formamidopyrimidine.</text>
        <dbReference type="EC" id="3.2.2.23"/>
    </reaction>
</comment>
<comment type="catalytic activity">
    <reaction evidence="2">
        <text>2'-deoxyribonucleotide-(2'-deoxyribose 5'-phosphate)-2'-deoxyribonucleotide-DNA = a 3'-end 2'-deoxyribonucleotide-(2,3-dehydro-2,3-deoxyribose 5'-phosphate)-DNA + a 5'-end 5'-phospho-2'-deoxyribonucleoside-DNA + H(+)</text>
        <dbReference type="Rhea" id="RHEA:66592"/>
        <dbReference type="Rhea" id="RHEA-COMP:13180"/>
        <dbReference type="Rhea" id="RHEA-COMP:16897"/>
        <dbReference type="Rhea" id="RHEA-COMP:17067"/>
        <dbReference type="ChEBI" id="CHEBI:15378"/>
        <dbReference type="ChEBI" id="CHEBI:136412"/>
        <dbReference type="ChEBI" id="CHEBI:157695"/>
        <dbReference type="ChEBI" id="CHEBI:167181"/>
        <dbReference type="EC" id="4.2.99.18"/>
    </reaction>
</comment>
<comment type="cofactor">
    <cofactor evidence="2">
        <name>Zn(2+)</name>
        <dbReference type="ChEBI" id="CHEBI:29105"/>
    </cofactor>
    <text evidence="2">Binds 1 zinc ion per subunit.</text>
</comment>
<comment type="subunit">
    <text evidence="2">Monomer.</text>
</comment>
<comment type="similarity">
    <text evidence="2">Belongs to the FPG family.</text>
</comment>
<evidence type="ECO:0000250" key="1"/>
<evidence type="ECO:0000255" key="2">
    <source>
        <dbReference type="HAMAP-Rule" id="MF_00103"/>
    </source>
</evidence>
<feature type="initiator methionine" description="Removed" evidence="1">
    <location>
        <position position="1"/>
    </location>
</feature>
<feature type="chain" id="PRO_1000118886" description="Formamidopyrimidine-DNA glycosylase">
    <location>
        <begin position="2"/>
        <end position="271"/>
    </location>
</feature>
<feature type="zinc finger region" description="FPG-type" evidence="2">
    <location>
        <begin position="236"/>
        <end position="270"/>
    </location>
</feature>
<feature type="active site" description="Schiff-base intermediate with DNA" evidence="2">
    <location>
        <position position="2"/>
    </location>
</feature>
<feature type="active site" description="Proton donor" evidence="2">
    <location>
        <position position="3"/>
    </location>
</feature>
<feature type="active site" description="Proton donor; for beta-elimination activity" evidence="2">
    <location>
        <position position="56"/>
    </location>
</feature>
<feature type="active site" description="Proton donor; for delta-elimination activity" evidence="2">
    <location>
        <position position="260"/>
    </location>
</feature>
<feature type="binding site" evidence="2">
    <location>
        <position position="89"/>
    </location>
    <ligand>
        <name>DNA</name>
        <dbReference type="ChEBI" id="CHEBI:16991"/>
    </ligand>
</feature>
<feature type="binding site" evidence="2">
    <location>
        <position position="107"/>
    </location>
    <ligand>
        <name>DNA</name>
        <dbReference type="ChEBI" id="CHEBI:16991"/>
    </ligand>
</feature>
<feature type="binding site" evidence="2">
    <location>
        <position position="151"/>
    </location>
    <ligand>
        <name>DNA</name>
        <dbReference type="ChEBI" id="CHEBI:16991"/>
    </ligand>
</feature>
<organism>
    <name type="scientific">Acidovorax ebreus (strain TPSY)</name>
    <name type="common">Diaphorobacter sp. (strain TPSY)</name>
    <dbReference type="NCBI Taxonomy" id="535289"/>
    <lineage>
        <taxon>Bacteria</taxon>
        <taxon>Pseudomonadati</taxon>
        <taxon>Pseudomonadota</taxon>
        <taxon>Betaproteobacteria</taxon>
        <taxon>Burkholderiales</taxon>
        <taxon>Comamonadaceae</taxon>
        <taxon>Diaphorobacter</taxon>
    </lineage>
</organism>
<dbReference type="EC" id="3.2.2.23" evidence="2"/>
<dbReference type="EC" id="4.2.99.18" evidence="2"/>
<dbReference type="EMBL" id="CP001392">
    <property type="protein sequence ID" value="ACM32306.1"/>
    <property type="molecule type" value="Genomic_DNA"/>
</dbReference>
<dbReference type="RefSeq" id="WP_012655798.1">
    <property type="nucleotide sequence ID" value="NC_011992.1"/>
</dbReference>
<dbReference type="SMR" id="B9ME52"/>
<dbReference type="KEGG" id="dia:Dtpsy_0828"/>
<dbReference type="eggNOG" id="COG0266">
    <property type="taxonomic scope" value="Bacteria"/>
</dbReference>
<dbReference type="HOGENOM" id="CLU_038423_1_1_4"/>
<dbReference type="Proteomes" id="UP000000450">
    <property type="component" value="Chromosome"/>
</dbReference>
<dbReference type="GO" id="GO:0034039">
    <property type="term" value="F:8-oxo-7,8-dihydroguanine DNA N-glycosylase activity"/>
    <property type="evidence" value="ECO:0007669"/>
    <property type="project" value="TreeGrafter"/>
</dbReference>
<dbReference type="GO" id="GO:0140078">
    <property type="term" value="F:class I DNA-(apurinic or apyrimidinic site) endonuclease activity"/>
    <property type="evidence" value="ECO:0007669"/>
    <property type="project" value="UniProtKB-EC"/>
</dbReference>
<dbReference type="GO" id="GO:0003684">
    <property type="term" value="F:damaged DNA binding"/>
    <property type="evidence" value="ECO:0007669"/>
    <property type="project" value="InterPro"/>
</dbReference>
<dbReference type="GO" id="GO:0008270">
    <property type="term" value="F:zinc ion binding"/>
    <property type="evidence" value="ECO:0007669"/>
    <property type="project" value="UniProtKB-UniRule"/>
</dbReference>
<dbReference type="GO" id="GO:0006284">
    <property type="term" value="P:base-excision repair"/>
    <property type="evidence" value="ECO:0007669"/>
    <property type="project" value="InterPro"/>
</dbReference>
<dbReference type="FunFam" id="1.10.8.50:FF:000003">
    <property type="entry name" value="Formamidopyrimidine-DNA glycosylase"/>
    <property type="match status" value="1"/>
</dbReference>
<dbReference type="Gene3D" id="1.10.8.50">
    <property type="match status" value="1"/>
</dbReference>
<dbReference type="Gene3D" id="3.20.190.10">
    <property type="entry name" value="MutM-like, N-terminal"/>
    <property type="match status" value="1"/>
</dbReference>
<dbReference type="HAMAP" id="MF_00103">
    <property type="entry name" value="Fapy_DNA_glycosyl"/>
    <property type="match status" value="1"/>
</dbReference>
<dbReference type="InterPro" id="IPR015886">
    <property type="entry name" value="DNA_glyclase/AP_lyase_DNA-bd"/>
</dbReference>
<dbReference type="InterPro" id="IPR015887">
    <property type="entry name" value="DNA_glyclase_Znf_dom_DNA_BS"/>
</dbReference>
<dbReference type="InterPro" id="IPR020629">
    <property type="entry name" value="Formamido-pyr_DNA_Glyclase"/>
</dbReference>
<dbReference type="InterPro" id="IPR012319">
    <property type="entry name" value="FPG_cat"/>
</dbReference>
<dbReference type="InterPro" id="IPR035937">
    <property type="entry name" value="MutM-like_N-ter"/>
</dbReference>
<dbReference type="InterPro" id="IPR010979">
    <property type="entry name" value="Ribosomal_uS13-like_H2TH"/>
</dbReference>
<dbReference type="InterPro" id="IPR000214">
    <property type="entry name" value="Znf_DNA_glyclase/AP_lyase"/>
</dbReference>
<dbReference type="InterPro" id="IPR010663">
    <property type="entry name" value="Znf_FPG/IleRS"/>
</dbReference>
<dbReference type="NCBIfam" id="TIGR00577">
    <property type="entry name" value="fpg"/>
    <property type="match status" value="1"/>
</dbReference>
<dbReference type="NCBIfam" id="NF002211">
    <property type="entry name" value="PRK01103.1"/>
    <property type="match status" value="1"/>
</dbReference>
<dbReference type="PANTHER" id="PTHR22993">
    <property type="entry name" value="FORMAMIDOPYRIMIDINE-DNA GLYCOSYLASE"/>
    <property type="match status" value="1"/>
</dbReference>
<dbReference type="PANTHER" id="PTHR22993:SF9">
    <property type="entry name" value="FORMAMIDOPYRIMIDINE-DNA GLYCOSYLASE"/>
    <property type="match status" value="1"/>
</dbReference>
<dbReference type="Pfam" id="PF01149">
    <property type="entry name" value="Fapy_DNA_glyco"/>
    <property type="match status" value="1"/>
</dbReference>
<dbReference type="Pfam" id="PF06831">
    <property type="entry name" value="H2TH"/>
    <property type="match status" value="1"/>
</dbReference>
<dbReference type="Pfam" id="PF06827">
    <property type="entry name" value="zf-FPG_IleRS"/>
    <property type="match status" value="1"/>
</dbReference>
<dbReference type="SMART" id="SM00898">
    <property type="entry name" value="Fapy_DNA_glyco"/>
    <property type="match status" value="1"/>
</dbReference>
<dbReference type="SMART" id="SM01232">
    <property type="entry name" value="H2TH"/>
    <property type="match status" value="1"/>
</dbReference>
<dbReference type="SUPFAM" id="SSF57716">
    <property type="entry name" value="Glucocorticoid receptor-like (DNA-binding domain)"/>
    <property type="match status" value="1"/>
</dbReference>
<dbReference type="SUPFAM" id="SSF81624">
    <property type="entry name" value="N-terminal domain of MutM-like DNA repair proteins"/>
    <property type="match status" value="1"/>
</dbReference>
<dbReference type="SUPFAM" id="SSF46946">
    <property type="entry name" value="S13-like H2TH domain"/>
    <property type="match status" value="1"/>
</dbReference>
<dbReference type="PROSITE" id="PS51068">
    <property type="entry name" value="FPG_CAT"/>
    <property type="match status" value="1"/>
</dbReference>
<dbReference type="PROSITE" id="PS01242">
    <property type="entry name" value="ZF_FPG_1"/>
    <property type="match status" value="1"/>
</dbReference>
<dbReference type="PROSITE" id="PS51066">
    <property type="entry name" value="ZF_FPG_2"/>
    <property type="match status" value="1"/>
</dbReference>
<sequence>MPELPEVEVTRRSFAGAIEGATVRGITVGKPLRWPLGTEPAVLVGRRVCGVRRRGKYLLLDLDEGLLLIHLGMSGSLRFARDLPARGAHDHFELITDHGTLRLHDPRRFGAVVWAAGESDPRARKLLDGWGLEPLGEDFAFEAFHAGLRAKRTPIKQLLLAGTVVVGVGNIYACEVLFLAGIRPTTRACAIGPQRARRLHGAIREVLARAVERGGSTLRDFSSADGSAGHFQLEANVYGRAGLQCRQCGTPVRLSRQGQRSTYFCPHCQRA</sequence>
<proteinExistence type="inferred from homology"/>
<accession>B9ME52</accession>